<organism>
    <name type="scientific">Escherichia coli (strain UTI89 / UPEC)</name>
    <dbReference type="NCBI Taxonomy" id="364106"/>
    <lineage>
        <taxon>Bacteria</taxon>
        <taxon>Pseudomonadati</taxon>
        <taxon>Pseudomonadota</taxon>
        <taxon>Gammaproteobacteria</taxon>
        <taxon>Enterobacterales</taxon>
        <taxon>Enterobacteriaceae</taxon>
        <taxon>Escherichia</taxon>
    </lineage>
</organism>
<evidence type="ECO:0000250" key="1"/>
<evidence type="ECO:0000305" key="2"/>
<gene>
    <name type="primary">yqgB</name>
    <name type="ordered locus">UTI89_C3328</name>
</gene>
<protein>
    <recommendedName>
        <fullName>Uncharacterized protein YqgB</fullName>
    </recommendedName>
</protein>
<sequence length="43" mass="4859">MKKKPVAQLERQHSLLENPCAYGLLSQFQAAIVVNCFTLNKII</sequence>
<name>YQGB_ECOUT</name>
<accession>Q1R788</accession>
<dbReference type="EMBL" id="CP000243">
    <property type="protein sequence ID" value="ABE08776.1"/>
    <property type="status" value="ALT_INIT"/>
    <property type="molecule type" value="Genomic_DNA"/>
</dbReference>
<dbReference type="RefSeq" id="WP_001297406.1">
    <property type="nucleotide sequence ID" value="NZ_CP064825.1"/>
</dbReference>
<dbReference type="GeneID" id="93779056"/>
<dbReference type="KEGG" id="eci:UTI89_C3328"/>
<dbReference type="HOGENOM" id="CLU_216465_0_0_6"/>
<dbReference type="Proteomes" id="UP000001952">
    <property type="component" value="Chromosome"/>
</dbReference>
<dbReference type="GO" id="GO:0005737">
    <property type="term" value="C:cytoplasm"/>
    <property type="evidence" value="ECO:0007669"/>
    <property type="project" value="UniProtKB-SubCell"/>
</dbReference>
<dbReference type="InterPro" id="IPR020196">
    <property type="entry name" value="Uncharacterised_YqgB"/>
</dbReference>
<dbReference type="NCBIfam" id="NF033844">
    <property type="entry name" value="small_YqgB"/>
    <property type="match status" value="1"/>
</dbReference>
<dbReference type="Pfam" id="PF11036">
    <property type="entry name" value="YqgB"/>
    <property type="match status" value="1"/>
</dbReference>
<comment type="subcellular location">
    <subcellularLocation>
        <location evidence="1">Cytoplasm</location>
    </subcellularLocation>
</comment>
<comment type="similarity">
    <text evidence="2">Belongs to the YqgB family.</text>
</comment>
<comment type="sequence caution" evidence="2">
    <conflict type="erroneous initiation">
        <sequence resource="EMBL-CDS" id="ABE08776"/>
    </conflict>
    <text>Extended N-terminus.</text>
</comment>
<keyword id="KW-0963">Cytoplasm</keyword>
<reference key="1">
    <citation type="journal article" date="2006" name="Proc. Natl. Acad. Sci. U.S.A.">
        <title>Identification of genes subject to positive selection in uropathogenic strains of Escherichia coli: a comparative genomics approach.</title>
        <authorList>
            <person name="Chen S.L."/>
            <person name="Hung C.-S."/>
            <person name="Xu J."/>
            <person name="Reigstad C.S."/>
            <person name="Magrini V."/>
            <person name="Sabo A."/>
            <person name="Blasiar D."/>
            <person name="Bieri T."/>
            <person name="Meyer R.R."/>
            <person name="Ozersky P."/>
            <person name="Armstrong J.R."/>
            <person name="Fulton R.S."/>
            <person name="Latreille J.P."/>
            <person name="Spieth J."/>
            <person name="Hooton T.M."/>
            <person name="Mardis E.R."/>
            <person name="Hultgren S.J."/>
            <person name="Gordon J.I."/>
        </authorList>
    </citation>
    <scope>NUCLEOTIDE SEQUENCE [LARGE SCALE GENOMIC DNA]</scope>
    <source>
        <strain>UTI89 / UPEC</strain>
    </source>
</reference>
<feature type="chain" id="PRO_0000294096" description="Uncharacterized protein YqgB">
    <location>
        <begin position="1"/>
        <end position="43"/>
    </location>
</feature>
<proteinExistence type="inferred from homology"/>